<protein>
    <recommendedName>
        <fullName evidence="1">Phosphoglycolate phosphatase</fullName>
        <shortName evidence="1">PGP</shortName>
        <shortName evidence="1">PGPase</shortName>
        <ecNumber evidence="1">3.1.3.18</ecNumber>
    </recommendedName>
</protein>
<keyword id="KW-0119">Carbohydrate metabolism</keyword>
<keyword id="KW-0378">Hydrolase</keyword>
<keyword id="KW-0460">Magnesium</keyword>
<keyword id="KW-0479">Metal-binding</keyword>
<keyword id="KW-1185">Reference proteome</keyword>
<accession>Q96YM5</accession>
<sequence length="226" mass="25654">MVLSDFDRTLSDEKDNFIIKQEVVEVVNKFSAKFLFFVVTGRERKYMDILAKGLFPTGWIIENGGIIILRDKEIKLVDEKWYKIRKNLAKILDKNGIKYSLGEVIIYVNSAIDYKDKLDKINEAKIEWNRSDAMIMPKNVSKGEAVKILKSILNFEGVTIAIGDSQNDISLFSVADIKVAVANALPEIKAISDIVLDKEDGIGVMRFLEKILNDGSYLEKLIGFRK</sequence>
<reference key="1">
    <citation type="journal article" date="2001" name="DNA Res.">
        <title>Complete genome sequence of an aerobic thermoacidophilic Crenarchaeon, Sulfolobus tokodaii strain7.</title>
        <authorList>
            <person name="Kawarabayasi Y."/>
            <person name="Hino Y."/>
            <person name="Horikawa H."/>
            <person name="Jin-no K."/>
            <person name="Takahashi M."/>
            <person name="Sekine M."/>
            <person name="Baba S."/>
            <person name="Ankai A."/>
            <person name="Kosugi H."/>
            <person name="Hosoyama A."/>
            <person name="Fukui S."/>
            <person name="Nagai Y."/>
            <person name="Nishijima K."/>
            <person name="Otsuka R."/>
            <person name="Nakazawa H."/>
            <person name="Takamiya M."/>
            <person name="Kato Y."/>
            <person name="Yoshizawa T."/>
            <person name="Tanaka T."/>
            <person name="Kudoh Y."/>
            <person name="Yamazaki J."/>
            <person name="Kushida N."/>
            <person name="Oguchi A."/>
            <person name="Aoki K."/>
            <person name="Masuda S."/>
            <person name="Yanagii M."/>
            <person name="Nishimura M."/>
            <person name="Yamagishi A."/>
            <person name="Oshima T."/>
            <person name="Kikuchi H."/>
        </authorList>
    </citation>
    <scope>NUCLEOTIDE SEQUENCE [LARGE SCALE GENOMIC DNA]</scope>
    <source>
        <strain>DSM 16993 / JCM 10545 / NBRC 100140 / 7</strain>
    </source>
</reference>
<evidence type="ECO:0000255" key="1">
    <source>
        <dbReference type="HAMAP-Rule" id="MF_01419"/>
    </source>
</evidence>
<dbReference type="EC" id="3.1.3.18" evidence="1"/>
<dbReference type="EMBL" id="BA000023">
    <property type="protein sequence ID" value="BAB67252.1"/>
    <property type="molecule type" value="Genomic_DNA"/>
</dbReference>
<dbReference type="RefSeq" id="WP_010980227.1">
    <property type="nucleotide sequence ID" value="NC_003106.2"/>
</dbReference>
<dbReference type="SMR" id="Q96YM5"/>
<dbReference type="STRING" id="273063.STK_21470"/>
<dbReference type="GeneID" id="1460220"/>
<dbReference type="KEGG" id="sto:STK_21470"/>
<dbReference type="PATRIC" id="fig|273063.9.peg.2438"/>
<dbReference type="eggNOG" id="arCOG01213">
    <property type="taxonomic scope" value="Archaea"/>
</dbReference>
<dbReference type="OrthoDB" id="120822at2157"/>
<dbReference type="Proteomes" id="UP000001015">
    <property type="component" value="Chromosome"/>
</dbReference>
<dbReference type="GO" id="GO:0005829">
    <property type="term" value="C:cytosol"/>
    <property type="evidence" value="ECO:0007669"/>
    <property type="project" value="TreeGrafter"/>
</dbReference>
<dbReference type="GO" id="GO:0000287">
    <property type="term" value="F:magnesium ion binding"/>
    <property type="evidence" value="ECO:0007669"/>
    <property type="project" value="InterPro"/>
</dbReference>
<dbReference type="GO" id="GO:0008967">
    <property type="term" value="F:phosphoglycolate phosphatase activity"/>
    <property type="evidence" value="ECO:0007669"/>
    <property type="project" value="UniProtKB-UniRule"/>
</dbReference>
<dbReference type="Gene3D" id="3.90.1070.10">
    <property type="match status" value="1"/>
</dbReference>
<dbReference type="Gene3D" id="3.40.50.1000">
    <property type="entry name" value="HAD superfamily/HAD-like"/>
    <property type="match status" value="1"/>
</dbReference>
<dbReference type="HAMAP" id="MF_01419">
    <property type="entry name" value="GPH_hydrolase_arch"/>
    <property type="match status" value="1"/>
</dbReference>
<dbReference type="InterPro" id="IPR036412">
    <property type="entry name" value="HAD-like_sf"/>
</dbReference>
<dbReference type="InterPro" id="IPR006379">
    <property type="entry name" value="HAD-SF_hydro_IIB"/>
</dbReference>
<dbReference type="InterPro" id="IPR023214">
    <property type="entry name" value="HAD_sf"/>
</dbReference>
<dbReference type="InterPro" id="IPR006382">
    <property type="entry name" value="PGPase"/>
</dbReference>
<dbReference type="NCBIfam" id="TIGR01484">
    <property type="entry name" value="HAD-SF-IIB"/>
    <property type="match status" value="1"/>
</dbReference>
<dbReference type="NCBIfam" id="TIGR01487">
    <property type="entry name" value="Pglycolate_arch"/>
    <property type="match status" value="1"/>
</dbReference>
<dbReference type="NCBIfam" id="TIGR01482">
    <property type="entry name" value="SPP-subfamily"/>
    <property type="match status" value="1"/>
</dbReference>
<dbReference type="PANTHER" id="PTHR10000:SF8">
    <property type="entry name" value="HAD SUPERFAMILY HYDROLASE-LIKE, TYPE 3"/>
    <property type="match status" value="1"/>
</dbReference>
<dbReference type="PANTHER" id="PTHR10000">
    <property type="entry name" value="PHOSPHOSERINE PHOSPHATASE"/>
    <property type="match status" value="1"/>
</dbReference>
<dbReference type="Pfam" id="PF08282">
    <property type="entry name" value="Hydrolase_3"/>
    <property type="match status" value="1"/>
</dbReference>
<dbReference type="SUPFAM" id="SSF56784">
    <property type="entry name" value="HAD-like"/>
    <property type="match status" value="1"/>
</dbReference>
<comment type="function">
    <text evidence="1">Catalyzes the dephosphorylation of 2-phosphoglycolate.</text>
</comment>
<comment type="catalytic activity">
    <reaction evidence="1">
        <text>2-phosphoglycolate + H2O = glycolate + phosphate</text>
        <dbReference type="Rhea" id="RHEA:14369"/>
        <dbReference type="ChEBI" id="CHEBI:15377"/>
        <dbReference type="ChEBI" id="CHEBI:29805"/>
        <dbReference type="ChEBI" id="CHEBI:43474"/>
        <dbReference type="ChEBI" id="CHEBI:58033"/>
        <dbReference type="EC" id="3.1.3.18"/>
    </reaction>
</comment>
<comment type="cofactor">
    <cofactor evidence="1">
        <name>Mg(2+)</name>
        <dbReference type="ChEBI" id="CHEBI:18420"/>
    </cofactor>
</comment>
<comment type="similarity">
    <text evidence="1">Belongs to the archaeal SPP-like hydrolase family.</text>
</comment>
<organism>
    <name type="scientific">Sulfurisphaera tokodaii (strain DSM 16993 / JCM 10545 / NBRC 100140 / 7)</name>
    <name type="common">Sulfolobus tokodaii</name>
    <dbReference type="NCBI Taxonomy" id="273063"/>
    <lineage>
        <taxon>Archaea</taxon>
        <taxon>Thermoproteota</taxon>
        <taxon>Thermoprotei</taxon>
        <taxon>Sulfolobales</taxon>
        <taxon>Sulfolobaceae</taxon>
        <taxon>Sulfurisphaera</taxon>
    </lineage>
</organism>
<gene>
    <name type="ordered locus">STK_21470</name>
</gene>
<feature type="chain" id="PRO_0000146730" description="Phosphoglycolate phosphatase">
    <location>
        <begin position="1"/>
        <end position="226"/>
    </location>
</feature>
<feature type="active site" description="Nucleophile" evidence="1">
    <location>
        <position position="5"/>
    </location>
</feature>
<feature type="binding site" evidence="1">
    <location>
        <position position="5"/>
    </location>
    <ligand>
        <name>Mg(2+)</name>
        <dbReference type="ChEBI" id="CHEBI:18420"/>
    </ligand>
</feature>
<feature type="binding site" evidence="1">
    <location>
        <position position="7"/>
    </location>
    <ligand>
        <name>Mg(2+)</name>
        <dbReference type="ChEBI" id="CHEBI:18420"/>
    </ligand>
</feature>
<feature type="binding site" evidence="1">
    <location>
        <position position="142"/>
    </location>
    <ligand>
        <name>substrate</name>
    </ligand>
</feature>
<feature type="binding site" evidence="1">
    <location>
        <position position="164"/>
    </location>
    <ligand>
        <name>Mg(2+)</name>
        <dbReference type="ChEBI" id="CHEBI:18420"/>
    </ligand>
</feature>
<feature type="binding site" evidence="1">
    <location>
        <position position="168"/>
    </location>
    <ligand>
        <name>Mg(2+)</name>
        <dbReference type="ChEBI" id="CHEBI:18420"/>
    </ligand>
</feature>
<name>PGP_SULTO</name>
<proteinExistence type="inferred from homology"/>